<feature type="chain" id="PRO_0000451491" description="MYB-like transcription factor EOBII">
    <location>
        <begin position="1"/>
        <end position="197"/>
    </location>
</feature>
<feature type="domain" description="HTH myb-type 1" evidence="1">
    <location>
        <begin position="10"/>
        <end position="62"/>
    </location>
</feature>
<feature type="domain" description="HTH myb-type 2" evidence="1">
    <location>
        <begin position="63"/>
        <end position="117"/>
    </location>
</feature>
<feature type="DNA-binding region" description="H-T-H motif" evidence="1">
    <location>
        <begin position="38"/>
        <end position="62"/>
    </location>
</feature>
<feature type="DNA-binding region" description="H-T-H motif" evidence="1">
    <location>
        <begin position="90"/>
        <end position="113"/>
    </location>
</feature>
<feature type="region of interest" description="Disordered" evidence="2">
    <location>
        <begin position="125"/>
        <end position="158"/>
    </location>
</feature>
<feature type="compositionally biased region" description="Polar residues" evidence="2">
    <location>
        <begin position="138"/>
        <end position="158"/>
    </location>
</feature>
<protein>
    <recommendedName>
        <fullName evidence="8">MYB-like transcription factor EOBII</fullName>
    </recommendedName>
    <alternativeName>
        <fullName evidence="9">MYB-like protein NON1</fullName>
        <shortName evidence="9">PhNON1</shortName>
    </alternativeName>
    <alternativeName>
        <fullName evidence="8">Protein EMISSION OF BENZENOIDS II</fullName>
        <shortName evidence="9">PhEOBII</shortName>
    </alternativeName>
</protein>
<reference key="1">
    <citation type="submission" date="2008-01" db="EMBL/GenBank/DDBJ databases">
        <title>Differential expression of transcription factors in petunia flowers.</title>
        <authorList>
            <person name="Verdonk J.C."/>
            <person name="Colquhoun T.A."/>
            <person name="Kim J.Y."/>
            <person name="Underwood B.A."/>
            <person name="Clark D.G."/>
        </authorList>
    </citation>
    <scope>NUCLEOTIDE SEQUENCE [MRNA]</scope>
    <source>
        <strain>cv. Mitchell</strain>
    </source>
</reference>
<reference key="2">
    <citation type="journal article" date="2010" name="Plant Cell">
        <title>EOBII, a gene encoding a flower-specific regulator of phenylpropanoid volatiles' biosynthesis in petunia.</title>
        <authorList>
            <person name="Spitzer-Rimon B."/>
            <person name="Marhevka E."/>
            <person name="Barkai O."/>
            <person name="Marton I."/>
            <person name="Edelbaum O."/>
            <person name="Masci T."/>
            <person name="Prathapani N.K."/>
            <person name="Shklarman E."/>
            <person name="Ovadis M."/>
            <person name="Vainstein A."/>
        </authorList>
    </citation>
    <scope>NUCLEOTIDE SEQUENCE [MRNA]</scope>
    <scope>FUNCTION</scope>
    <scope>DISRUPTION PHENOTYPE</scope>
    <scope>DEVELOPMENTAL STAGE</scope>
    <scope>SUBCELLULAR LOCATION</scope>
    <scope>TISSUE SPECIFICITY</scope>
    <scope>INDUCTION</scope>
    <source>
        <strain>cv. Violet 26</strain>
    </source>
</reference>
<reference key="3">
    <citation type="journal article" date="2011" name="Plant Physiol.">
        <title>EOBII controls flower opening by functioning as a general transcriptomic switch.</title>
        <authorList>
            <person name="Colquhoun T.A."/>
            <person name="Schwieterman M.L."/>
            <person name="Wedde A.E."/>
            <person name="Schimmel B.C.J."/>
            <person name="Marciniak D.M."/>
            <person name="Verdonk J.C."/>
            <person name="Kim J.Y."/>
            <person name="Oh Y."/>
            <person name="Galis I."/>
            <person name="Baldwin I.T."/>
            <person name="Clark D.G."/>
        </authorList>
    </citation>
    <scope>NUCLEOTIDE SEQUENCE [GENOMIC DNA] OF 1-9</scope>
    <scope>FUNCTION</scope>
    <scope>DISRUPTION PHENOTYPE</scope>
    <scope>TISSUE SPECIFICITY</scope>
    <scope>DEVELOPMENTAL STAGE</scope>
    <source>
        <strain>cv. Mitchell</strain>
    </source>
</reference>
<reference key="4">
    <citation type="journal article" date="2011" name="Plant J.">
        <title>The transcription factor EMISSION OF BENZENOIDS II activates the MYB ODORANT1 promoter at a MYB binding site specific for fragrant petunias.</title>
        <authorList>
            <person name="Van Moerkercke A."/>
            <person name="Haring M.A."/>
            <person name="Schuurink R.C."/>
        </authorList>
    </citation>
    <scope>FUNCTION</scope>
    <scope>TISSUE SPECIFICITY</scope>
    <source>
        <strain>cv. Mitchell</strain>
        <strain>cv. R27</strain>
        <strain>cv. Violet 26</strain>
    </source>
</reference>
<reference key="5">
    <citation type="journal article" date="2012" name="Plant Cell">
        <title>The R2R3-MYB-like regulatory factor EOBI, acting downstream of EOBII, regulates scent production by activating ODO1 and structural scent-related genes in petunia.</title>
        <authorList>
            <person name="Spitzer-Rimon B."/>
            <person name="Farhi M."/>
            <person name="Albo B."/>
            <person name="Cna'ani A."/>
            <person name="Ben Zvi M.M."/>
            <person name="Masci T."/>
            <person name="Edelbaum O."/>
            <person name="Yu Y."/>
            <person name="Shklarman E."/>
            <person name="Ovadis M."/>
            <person name="Vainstein A."/>
        </authorList>
    </citation>
    <scope>FUNCTION</scope>
    <scope>DISRUPTION PHENOTYPE</scope>
    <scope>GENE FAMILY</scope>
    <scope>NOMENCLATURE</scope>
    <source>
        <strain>cv. W115</strain>
    </source>
</reference>
<reference key="6">
    <citation type="journal article" date="2012" name="Plant Signal. Behav.">
        <title>A model for combinatorial regulation of the petunia R2R3-MYB transcription factor ODORANT1.</title>
        <authorList>
            <person name="Van Moerkercke A."/>
            <person name="Haring M.A."/>
            <person name="Schuurink R.C."/>
        </authorList>
    </citation>
    <scope>FUNCTION</scope>
    <source>
        <strain>cv. Mitchell</strain>
        <strain>cv. R27</strain>
    </source>
</reference>
<gene>
    <name evidence="8" type="primary">EOBII</name>
    <name evidence="9" type="synonym">NON1</name>
</gene>
<name>EOBII_PETHY</name>
<evidence type="ECO:0000255" key="1">
    <source>
        <dbReference type="PROSITE-ProRule" id="PRU00625"/>
    </source>
</evidence>
<evidence type="ECO:0000256" key="2">
    <source>
        <dbReference type="SAM" id="MobiDB-lite"/>
    </source>
</evidence>
<evidence type="ECO:0000269" key="3">
    <source>
    </source>
</evidence>
<evidence type="ECO:0000269" key="4">
    <source>
    </source>
</evidence>
<evidence type="ECO:0000269" key="5">
    <source>
    </source>
</evidence>
<evidence type="ECO:0000269" key="6">
    <source>
    </source>
</evidence>
<evidence type="ECO:0000269" key="7">
    <source>
    </source>
</evidence>
<evidence type="ECO:0000303" key="8">
    <source>
    </source>
</evidence>
<evidence type="ECO:0000303" key="9">
    <source>
    </source>
</evidence>
<organism>
    <name type="scientific">Petunia hybrida</name>
    <name type="common">Petunia</name>
    <dbReference type="NCBI Taxonomy" id="4102"/>
    <lineage>
        <taxon>Eukaryota</taxon>
        <taxon>Viridiplantae</taxon>
        <taxon>Streptophyta</taxon>
        <taxon>Embryophyta</taxon>
        <taxon>Tracheophyta</taxon>
        <taxon>Spermatophyta</taxon>
        <taxon>Magnoliopsida</taxon>
        <taxon>eudicotyledons</taxon>
        <taxon>Gunneridae</taxon>
        <taxon>Pentapetalae</taxon>
        <taxon>asterids</taxon>
        <taxon>lamiids</taxon>
        <taxon>Solanales</taxon>
        <taxon>Solanaceae</taxon>
        <taxon>Petunioideae</taxon>
        <taxon>Petunia</taxon>
    </lineage>
</organism>
<comment type="function">
    <text evidence="3 4 5 6 7">MYB-type transcription factor controlling the production of volatile organic compounds (VOCs), including floral volatile benzenoids and phenylpropanoids (FVBP), in flowers of fragrant cultivars (e.g. cv. Mitchell and cv. V26) by regulating the expression of ODO1 and EOBI, key regulators of the shikimate pathway, and of several biosynthetic floral scent-related genes including IGS, PAL2 and CFAT (PubMed:20543029, PubMed:21585571, PubMed:23275577). This scent, mostly produced in the evening and night by the petals, attracts the pollinators (e.g. the night-active hawkmoth pollinator Manduca sexta) (PubMed:20543029, PubMed:21585571). Binds to and activates the ODO1 and EOBI promoters via MYB binding sites (MBS) 5'-AAACCTAAT-3' and 5'-CTAACT-3' (PubMed:20543029, PubMed:21585571, PubMed:22499185, PubMed:23275577). Regulates the promoters of IGS1, CFAT and PAL2 (PubMed:20543029). Controls flowers petal opening by modulating a global transcriptomic switch (PubMed:21464473).</text>
</comment>
<comment type="subcellular location">
    <subcellularLocation>
        <location evidence="1 3">Nucleus</location>
    </subcellularLocation>
</comment>
<comment type="tissue specificity">
    <text evidence="3 4 5">Specifically expressed in flowers, mostly in stigmas, petal tubes and petal limbs, and, to a lower extent, in anthers and stamen (PubMed:20543029, PubMed:21464473, PubMed:21585571). Also present at low levels in roots, stems, leaves and sepals (PubMed:20543029, PubMed:21464473).</text>
</comment>
<comment type="developmental stage">
    <text evidence="3 4">Expressed early in flower development (PubMed:20543029). In corollas, accumulates progressively during flower development, from buds to anthesis, with a peak at flower opening, but fades out in senescing flowers (PubMed:20543029, PubMed:21464473).</text>
</comment>
<comment type="induction">
    <text evidence="3">Circadian-regulation with peak levels occurring in the early morning hours and lowest levels during the late afternoon hours in flowers.</text>
</comment>
<comment type="disruption phenotype">
    <text evidence="3 4 7">Impaired expression of ODO1, EOBI and several biosynthetic floral scent-related genes (e.g. IGS, PAL2 and CFAT) leading to reduced scent production in flowers (e.g. phenylpropanoid volatiles including benzaldehyde, phenylethyl alcohol, benzylbenzoate and isoeugenol) (PubMed:20543029, PubMed:21464473, PubMed:23275577). Impaired anthesis enter and premature senescence of flowers (PubMed:21464473). Altered cell wall modifier transcript levels in flowers (PubMed:21464473).</text>
</comment>
<keyword id="KW-0010">Activator</keyword>
<keyword id="KW-0238">DNA-binding</keyword>
<keyword id="KW-0287">Flowering</keyword>
<keyword id="KW-0539">Nucleus</keyword>
<keyword id="KW-0677">Repeat</keyword>
<keyword id="KW-0804">Transcription</keyword>
<keyword id="KW-0805">Transcription regulation</keyword>
<accession>E0CJS3</accession>
<accession>F8S2G9</accession>
<proteinExistence type="evidence at transcript level"/>
<dbReference type="EMBL" id="EU374207">
    <property type="protein sequence ID" value="ACB12237.1"/>
    <property type="molecule type" value="mRNA"/>
</dbReference>
<dbReference type="EMBL" id="EU360893">
    <property type="protein sequence ID" value="ACB59077.1"/>
    <property type="molecule type" value="mRNA"/>
</dbReference>
<dbReference type="EMBL" id="HQ450382">
    <property type="protein sequence ID" value="AEI83419.1"/>
    <property type="molecule type" value="Genomic_DNA"/>
</dbReference>
<dbReference type="SMR" id="E0CJS3"/>
<dbReference type="GO" id="GO:0005634">
    <property type="term" value="C:nucleus"/>
    <property type="evidence" value="ECO:0000314"/>
    <property type="project" value="UniProtKB"/>
</dbReference>
<dbReference type="GO" id="GO:0009505">
    <property type="term" value="C:plant-type cell wall"/>
    <property type="evidence" value="ECO:0000315"/>
    <property type="project" value="UniProtKB"/>
</dbReference>
<dbReference type="GO" id="GO:0003700">
    <property type="term" value="F:DNA-binding transcription factor activity"/>
    <property type="evidence" value="ECO:0000314"/>
    <property type="project" value="UniProtKB"/>
</dbReference>
<dbReference type="GO" id="GO:0043565">
    <property type="term" value="F:sequence-specific DNA binding"/>
    <property type="evidence" value="ECO:0000314"/>
    <property type="project" value="UniProtKB"/>
</dbReference>
<dbReference type="GO" id="GO:0000976">
    <property type="term" value="F:transcription cis-regulatory region binding"/>
    <property type="evidence" value="ECO:0000314"/>
    <property type="project" value="UniProtKB"/>
</dbReference>
<dbReference type="GO" id="GO:0007623">
    <property type="term" value="P:circadian rhythm"/>
    <property type="evidence" value="ECO:0000270"/>
    <property type="project" value="UniProtKB"/>
</dbReference>
<dbReference type="GO" id="GO:0080187">
    <property type="term" value="P:floral organ senescence"/>
    <property type="evidence" value="ECO:0000315"/>
    <property type="project" value="UniProtKB"/>
</dbReference>
<dbReference type="GO" id="GO:0010597">
    <property type="term" value="P:green leaf volatile biosynthetic process"/>
    <property type="evidence" value="ECO:0000314"/>
    <property type="project" value="UniProtKB"/>
</dbReference>
<dbReference type="GO" id="GO:1903338">
    <property type="term" value="P:regulation of cell wall organization or biogenesis"/>
    <property type="evidence" value="ECO:0000315"/>
    <property type="project" value="UniProtKB"/>
</dbReference>
<dbReference type="GO" id="GO:0006355">
    <property type="term" value="P:regulation of DNA-templated transcription"/>
    <property type="evidence" value="ECO:0000314"/>
    <property type="project" value="UniProtKB"/>
</dbReference>
<dbReference type="GO" id="GO:0009909">
    <property type="term" value="P:regulation of flower development"/>
    <property type="evidence" value="ECO:0000315"/>
    <property type="project" value="UniProtKB"/>
</dbReference>
<dbReference type="GO" id="GO:0010468">
    <property type="term" value="P:regulation of gene expression"/>
    <property type="evidence" value="ECO:0000314"/>
    <property type="project" value="UniProtKB"/>
</dbReference>
<dbReference type="GO" id="GO:2000762">
    <property type="term" value="P:regulation of phenylpropanoid metabolic process"/>
    <property type="evidence" value="ECO:0000315"/>
    <property type="project" value="UniProtKB"/>
</dbReference>
<dbReference type="CDD" id="cd00167">
    <property type="entry name" value="SANT"/>
    <property type="match status" value="2"/>
</dbReference>
<dbReference type="FunFam" id="1.10.10.60:FF:000011">
    <property type="entry name" value="Myb transcription factor"/>
    <property type="match status" value="1"/>
</dbReference>
<dbReference type="FunFam" id="1.10.10.60:FF:000358">
    <property type="entry name" value="Myb-related protein 305"/>
    <property type="match status" value="1"/>
</dbReference>
<dbReference type="Gene3D" id="1.10.10.60">
    <property type="entry name" value="Homeodomain-like"/>
    <property type="match status" value="2"/>
</dbReference>
<dbReference type="InterPro" id="IPR044676">
    <property type="entry name" value="EOBI/EOBII-like_plant"/>
</dbReference>
<dbReference type="InterPro" id="IPR009057">
    <property type="entry name" value="Homeodomain-like_sf"/>
</dbReference>
<dbReference type="InterPro" id="IPR017930">
    <property type="entry name" value="Myb_dom"/>
</dbReference>
<dbReference type="InterPro" id="IPR001005">
    <property type="entry name" value="SANT/Myb"/>
</dbReference>
<dbReference type="PANTHER" id="PTHR45675">
    <property type="entry name" value="MYB TRANSCRIPTION FACTOR-RELATED-RELATED"/>
    <property type="match status" value="1"/>
</dbReference>
<dbReference type="PANTHER" id="PTHR45675:SF44">
    <property type="entry name" value="TRANSCRIPTION FACTOR MYB24"/>
    <property type="match status" value="1"/>
</dbReference>
<dbReference type="Pfam" id="PF00249">
    <property type="entry name" value="Myb_DNA-binding"/>
    <property type="match status" value="2"/>
</dbReference>
<dbReference type="SMART" id="SM00717">
    <property type="entry name" value="SANT"/>
    <property type="match status" value="2"/>
</dbReference>
<dbReference type="SUPFAM" id="SSF46689">
    <property type="entry name" value="Homeodomain-like"/>
    <property type="match status" value="1"/>
</dbReference>
<dbReference type="PROSITE" id="PS51294">
    <property type="entry name" value="HTH_MYB"/>
    <property type="match status" value="2"/>
</dbReference>
<sequence length="197" mass="22585">MDKKPCNSQDAEVRKGPWTMEEDLILINYIANHGEGVWNSLAKSAGLKRTGKSCRLRWLNYLRPDVRRGNITPEEQLLIMELHAKWGNRWSKIAKHLPGRTDNEIKNYWRTRIQKHIKQAETMNGQAASSEQNDHQEACTSQMSNGPNDNTIDQTYSPTSYSGNVDTFQAGPNFLTEANDNMWSMEDIWSMQLLNGD</sequence>